<keyword id="KW-0929">Antimicrobial</keyword>
<keyword id="KW-1015">Disulfide bond</keyword>
<keyword id="KW-0295">Fungicide</keyword>
<keyword id="KW-0611">Plant defense</keyword>
<keyword id="KW-1185">Reference proteome</keyword>
<keyword id="KW-0964">Secreted</keyword>
<keyword id="KW-0732">Signal</keyword>
<protein>
    <recommendedName>
        <fullName>Defensin-like protein 210</fullName>
    </recommendedName>
</protein>
<proteinExistence type="evidence at transcript level"/>
<evidence type="ECO:0000250" key="1"/>
<evidence type="ECO:0000255" key="2"/>
<evidence type="ECO:0000305" key="3"/>
<dbReference type="EMBL" id="AF128396">
    <property type="status" value="NOT_ANNOTATED_CDS"/>
    <property type="molecule type" value="Genomic_DNA"/>
</dbReference>
<dbReference type="EMBL" id="AL161513">
    <property type="status" value="NOT_ANNOTATED_CDS"/>
    <property type="molecule type" value="Genomic_DNA"/>
</dbReference>
<dbReference type="EMBL" id="CP002687">
    <property type="protein sequence ID" value="AEE82686.1"/>
    <property type="molecule type" value="Genomic_DNA"/>
</dbReference>
<dbReference type="RefSeq" id="NP_001031600.1">
    <property type="nucleotide sequence ID" value="NM_001036523.2"/>
</dbReference>
<dbReference type="SMR" id="Q2V3K4"/>
<dbReference type="STRING" id="3702.Q2V3K4"/>
<dbReference type="PaxDb" id="3702-AT4G08869.1"/>
<dbReference type="EnsemblPlants" id="AT4G08869.1">
    <property type="protein sequence ID" value="AT4G08869.1"/>
    <property type="gene ID" value="AT4G08869"/>
</dbReference>
<dbReference type="GeneID" id="3770195"/>
<dbReference type="Gramene" id="AT4G08869.1">
    <property type="protein sequence ID" value="AT4G08869.1"/>
    <property type="gene ID" value="AT4G08869"/>
</dbReference>
<dbReference type="KEGG" id="ath:AT4G08869"/>
<dbReference type="Araport" id="AT4G08869"/>
<dbReference type="TAIR" id="AT4G08869">
    <property type="gene designation" value="LURE1.7"/>
</dbReference>
<dbReference type="HOGENOM" id="CLU_180309_0_0_1"/>
<dbReference type="InParanoid" id="Q2V3K4"/>
<dbReference type="OMA" id="KACFRRN"/>
<dbReference type="PhylomeDB" id="Q2V3K4"/>
<dbReference type="PRO" id="PR:Q2V3K4"/>
<dbReference type="Proteomes" id="UP000006548">
    <property type="component" value="Chromosome 4"/>
</dbReference>
<dbReference type="ExpressionAtlas" id="Q2V3K4">
    <property type="expression patterns" value="baseline and differential"/>
</dbReference>
<dbReference type="GO" id="GO:0005576">
    <property type="term" value="C:extracellular region"/>
    <property type="evidence" value="ECO:0007669"/>
    <property type="project" value="UniProtKB-SubCell"/>
</dbReference>
<dbReference type="GO" id="GO:0043680">
    <property type="term" value="C:filiform apparatus"/>
    <property type="evidence" value="ECO:0000314"/>
    <property type="project" value="TAIR"/>
</dbReference>
<dbReference type="GO" id="GO:0050832">
    <property type="term" value="P:defense response to fungus"/>
    <property type="evidence" value="ECO:0007669"/>
    <property type="project" value="UniProtKB-KW"/>
</dbReference>
<dbReference type="GO" id="GO:0031640">
    <property type="term" value="P:killing of cells of another organism"/>
    <property type="evidence" value="ECO:0007669"/>
    <property type="project" value="UniProtKB-KW"/>
</dbReference>
<dbReference type="GO" id="GO:0010183">
    <property type="term" value="P:pollen tube guidance"/>
    <property type="evidence" value="ECO:0000314"/>
    <property type="project" value="TAIR"/>
</dbReference>
<gene>
    <name type="ordered locus">At4g08869</name>
    <name type="ORF">T3H13</name>
</gene>
<accession>Q2V3K4</accession>
<name>DF210_ARATH</name>
<reference key="1">
    <citation type="journal article" date="1999" name="Nature">
        <title>Sequence and analysis of chromosome 4 of the plant Arabidopsis thaliana.</title>
        <authorList>
            <person name="Mayer K.F.X."/>
            <person name="Schueller C."/>
            <person name="Wambutt R."/>
            <person name="Murphy G."/>
            <person name="Volckaert G."/>
            <person name="Pohl T."/>
            <person name="Duesterhoeft A."/>
            <person name="Stiekema W."/>
            <person name="Entian K.-D."/>
            <person name="Terryn N."/>
            <person name="Harris B."/>
            <person name="Ansorge W."/>
            <person name="Brandt P."/>
            <person name="Grivell L.A."/>
            <person name="Rieger M."/>
            <person name="Weichselgartner M."/>
            <person name="de Simone V."/>
            <person name="Obermaier B."/>
            <person name="Mache R."/>
            <person name="Mueller M."/>
            <person name="Kreis M."/>
            <person name="Delseny M."/>
            <person name="Puigdomenech P."/>
            <person name="Watson M."/>
            <person name="Schmidtheini T."/>
            <person name="Reichert B."/>
            <person name="Portetelle D."/>
            <person name="Perez-Alonso M."/>
            <person name="Boutry M."/>
            <person name="Bancroft I."/>
            <person name="Vos P."/>
            <person name="Hoheisel J."/>
            <person name="Zimmermann W."/>
            <person name="Wedler H."/>
            <person name="Ridley P."/>
            <person name="Langham S.-A."/>
            <person name="McCullagh B."/>
            <person name="Bilham L."/>
            <person name="Robben J."/>
            <person name="van der Schueren J."/>
            <person name="Grymonprez B."/>
            <person name="Chuang Y.-J."/>
            <person name="Vandenbussche F."/>
            <person name="Braeken M."/>
            <person name="Weltjens I."/>
            <person name="Voet M."/>
            <person name="Bastiaens I."/>
            <person name="Aert R."/>
            <person name="Defoor E."/>
            <person name="Weitzenegger T."/>
            <person name="Bothe G."/>
            <person name="Ramsperger U."/>
            <person name="Hilbert H."/>
            <person name="Braun M."/>
            <person name="Holzer E."/>
            <person name="Brandt A."/>
            <person name="Peters S."/>
            <person name="van Staveren M."/>
            <person name="Dirkse W."/>
            <person name="Mooijman P."/>
            <person name="Klein Lankhorst R."/>
            <person name="Rose M."/>
            <person name="Hauf J."/>
            <person name="Koetter P."/>
            <person name="Berneiser S."/>
            <person name="Hempel S."/>
            <person name="Feldpausch M."/>
            <person name="Lamberth S."/>
            <person name="Van den Daele H."/>
            <person name="De Keyser A."/>
            <person name="Buysshaert C."/>
            <person name="Gielen J."/>
            <person name="Villarroel R."/>
            <person name="De Clercq R."/>
            <person name="van Montagu M."/>
            <person name="Rogers J."/>
            <person name="Cronin A."/>
            <person name="Quail M.A."/>
            <person name="Bray-Allen S."/>
            <person name="Clark L."/>
            <person name="Doggett J."/>
            <person name="Hall S."/>
            <person name="Kay M."/>
            <person name="Lennard N."/>
            <person name="McLay K."/>
            <person name="Mayes R."/>
            <person name="Pettett A."/>
            <person name="Rajandream M.A."/>
            <person name="Lyne M."/>
            <person name="Benes V."/>
            <person name="Rechmann S."/>
            <person name="Borkova D."/>
            <person name="Bloecker H."/>
            <person name="Scharfe M."/>
            <person name="Grimm M."/>
            <person name="Loehnert T.-H."/>
            <person name="Dose S."/>
            <person name="de Haan M."/>
            <person name="Maarse A.C."/>
            <person name="Schaefer M."/>
            <person name="Mueller-Auer S."/>
            <person name="Gabel C."/>
            <person name="Fuchs M."/>
            <person name="Fartmann B."/>
            <person name="Granderath K."/>
            <person name="Dauner D."/>
            <person name="Herzl A."/>
            <person name="Neumann S."/>
            <person name="Argiriou A."/>
            <person name="Vitale D."/>
            <person name="Liguori R."/>
            <person name="Piravandi E."/>
            <person name="Massenet O."/>
            <person name="Quigley F."/>
            <person name="Clabauld G."/>
            <person name="Muendlein A."/>
            <person name="Felber R."/>
            <person name="Schnabl S."/>
            <person name="Hiller R."/>
            <person name="Schmidt W."/>
            <person name="Lecharny A."/>
            <person name="Aubourg S."/>
            <person name="Chefdor F."/>
            <person name="Cooke R."/>
            <person name="Berger C."/>
            <person name="Monfort A."/>
            <person name="Casacuberta E."/>
            <person name="Gibbons T."/>
            <person name="Weber N."/>
            <person name="Vandenbol M."/>
            <person name="Bargues M."/>
            <person name="Terol J."/>
            <person name="Torres A."/>
            <person name="Perez-Perez A."/>
            <person name="Purnelle B."/>
            <person name="Bent E."/>
            <person name="Johnson S."/>
            <person name="Tacon D."/>
            <person name="Jesse T."/>
            <person name="Heijnen L."/>
            <person name="Schwarz S."/>
            <person name="Scholler P."/>
            <person name="Heber S."/>
            <person name="Francs P."/>
            <person name="Bielke C."/>
            <person name="Frishman D."/>
            <person name="Haase D."/>
            <person name="Lemcke K."/>
            <person name="Mewes H.-W."/>
            <person name="Stocker S."/>
            <person name="Zaccaria P."/>
            <person name="Bevan M."/>
            <person name="Wilson R.K."/>
            <person name="de la Bastide M."/>
            <person name="Habermann K."/>
            <person name="Parnell L."/>
            <person name="Dedhia N."/>
            <person name="Gnoj L."/>
            <person name="Schutz K."/>
            <person name="Huang E."/>
            <person name="Spiegel L."/>
            <person name="Sekhon M."/>
            <person name="Murray J."/>
            <person name="Sheet P."/>
            <person name="Cordes M."/>
            <person name="Abu-Threideh J."/>
            <person name="Stoneking T."/>
            <person name="Kalicki J."/>
            <person name="Graves T."/>
            <person name="Harmon G."/>
            <person name="Edwards J."/>
            <person name="Latreille P."/>
            <person name="Courtney L."/>
            <person name="Cloud J."/>
            <person name="Abbott A."/>
            <person name="Scott K."/>
            <person name="Johnson D."/>
            <person name="Minx P."/>
            <person name="Bentley D."/>
            <person name="Fulton B."/>
            <person name="Miller N."/>
            <person name="Greco T."/>
            <person name="Kemp K."/>
            <person name="Kramer J."/>
            <person name="Fulton L."/>
            <person name="Mardis E."/>
            <person name="Dante M."/>
            <person name="Pepin K."/>
            <person name="Hillier L.W."/>
            <person name="Nelson J."/>
            <person name="Spieth J."/>
            <person name="Ryan E."/>
            <person name="Andrews S."/>
            <person name="Geisel C."/>
            <person name="Layman D."/>
            <person name="Du H."/>
            <person name="Ali J."/>
            <person name="Berghoff A."/>
            <person name="Jones K."/>
            <person name="Drone K."/>
            <person name="Cotton M."/>
            <person name="Joshu C."/>
            <person name="Antonoiu B."/>
            <person name="Zidanic M."/>
            <person name="Strong C."/>
            <person name="Sun H."/>
            <person name="Lamar B."/>
            <person name="Yordan C."/>
            <person name="Ma P."/>
            <person name="Zhong J."/>
            <person name="Preston R."/>
            <person name="Vil D."/>
            <person name="Shekher M."/>
            <person name="Matero A."/>
            <person name="Shah R."/>
            <person name="Swaby I.K."/>
            <person name="O'Shaughnessy A."/>
            <person name="Rodriguez M."/>
            <person name="Hoffman J."/>
            <person name="Till S."/>
            <person name="Granat S."/>
            <person name="Shohdy N."/>
            <person name="Hasegawa A."/>
            <person name="Hameed A."/>
            <person name="Lodhi M."/>
            <person name="Johnson A."/>
            <person name="Chen E."/>
            <person name="Marra M.A."/>
            <person name="Martienssen R."/>
            <person name="McCombie W.R."/>
        </authorList>
    </citation>
    <scope>NUCLEOTIDE SEQUENCE [LARGE SCALE GENOMIC DNA]</scope>
    <source>
        <strain>cv. Columbia</strain>
    </source>
</reference>
<reference key="2">
    <citation type="journal article" date="2017" name="Plant J.">
        <title>Araport11: a complete reannotation of the Arabidopsis thaliana reference genome.</title>
        <authorList>
            <person name="Cheng C.Y."/>
            <person name="Krishnakumar V."/>
            <person name="Chan A.P."/>
            <person name="Thibaud-Nissen F."/>
            <person name="Schobel S."/>
            <person name="Town C.D."/>
        </authorList>
    </citation>
    <scope>GENOME REANNOTATION</scope>
    <source>
        <strain>cv. Columbia</strain>
    </source>
</reference>
<reference key="3">
    <citation type="journal article" date="2005" name="Plant Physiol.">
        <title>Genome organization of more than 300 defensin-like genes in Arabidopsis.</title>
        <authorList>
            <person name="Silverstein K.A.T."/>
            <person name="Graham M.A."/>
            <person name="Paape T.D."/>
            <person name="VandenBosch K.A."/>
        </authorList>
    </citation>
    <scope>GENE FAMILY</scope>
</reference>
<comment type="subcellular location">
    <subcellularLocation>
        <location evidence="1">Secreted</location>
    </subcellularLocation>
</comment>
<comment type="similarity">
    <text evidence="3">Belongs to the DEFL family.</text>
</comment>
<comment type="caution">
    <text evidence="3">Lacks 1 of the 4 disulfide bonds, which are conserved features of the family.</text>
</comment>
<feature type="signal peptide" evidence="2">
    <location>
        <begin position="1"/>
        <end position="19"/>
    </location>
</feature>
<feature type="chain" id="PRO_0000379702" description="Defensin-like protein 210">
    <location>
        <begin position="20"/>
        <end position="93"/>
    </location>
</feature>
<feature type="disulfide bond" evidence="1">
    <location>
        <begin position="63"/>
        <end position="80"/>
    </location>
</feature>
<feature type="disulfide bond" evidence="1">
    <location>
        <begin position="66"/>
        <end position="85"/>
    </location>
</feature>
<feature type="disulfide bond" evidence="1">
    <location>
        <begin position="70"/>
        <end position="87"/>
    </location>
</feature>
<sequence>MKTIILFLTLLVISSSCTSIITKTMNSKETTYLDSPAVSPSIDQYLVDIHLGHSFLQGVMSFCYDCGKACFRRGKNLARCKKFVCRCTKSGIK</sequence>
<organism>
    <name type="scientific">Arabidopsis thaliana</name>
    <name type="common">Mouse-ear cress</name>
    <dbReference type="NCBI Taxonomy" id="3702"/>
    <lineage>
        <taxon>Eukaryota</taxon>
        <taxon>Viridiplantae</taxon>
        <taxon>Streptophyta</taxon>
        <taxon>Embryophyta</taxon>
        <taxon>Tracheophyta</taxon>
        <taxon>Spermatophyta</taxon>
        <taxon>Magnoliopsida</taxon>
        <taxon>eudicotyledons</taxon>
        <taxon>Gunneridae</taxon>
        <taxon>Pentapetalae</taxon>
        <taxon>rosids</taxon>
        <taxon>malvids</taxon>
        <taxon>Brassicales</taxon>
        <taxon>Brassicaceae</taxon>
        <taxon>Camelineae</taxon>
        <taxon>Arabidopsis</taxon>
    </lineage>
</organism>